<keyword id="KW-0539">Nucleus</keyword>
<keyword id="KW-1185">Reference proteome</keyword>
<keyword id="KW-0690">Ribosome biogenesis</keyword>
<keyword id="KW-0698">rRNA processing</keyword>
<protein>
    <recommendedName>
        <fullName evidence="1">Pescadillo homolog</fullName>
    </recommendedName>
</protein>
<accession>Q7ZY69</accession>
<comment type="function">
    <text evidence="1 3">Component of the PeBoW complex, which is required for maturation of 28S and 5.8S ribosomal RNAs and formation of the 60S ribosome (By similarity). Required for neural crest migration and eye development.</text>
</comment>
<comment type="subunit">
    <text evidence="1">Component of the PeBoW complex, composed of bop1, pes1 and wdr12. The complex is held together by bop1, which interacts with pes1 via its N-terminal domain and with wdr12 via a high-affinity interaction between the seven-bladed beta-propeller domains of the 2 proteins. The PeBoW complex associates with the 66S pre-ribosome.</text>
</comment>
<comment type="subcellular location">
    <subcellularLocation>
        <location evidence="1">Nucleus</location>
        <location evidence="1">Nucleolus</location>
    </subcellularLocation>
    <subcellularLocation>
        <location evidence="1">Nucleus</location>
        <location evidence="1">Nucleoplasm</location>
    </subcellularLocation>
</comment>
<comment type="developmental stage">
    <text evidence="3">Maternally expressed. Strongly expressed in the anterior neural plate at stage 18. Expressed in the migrating cranial neural crest and the developing eye at stage 23. Also expressed in the midbrain-hindbrain boundary, migrating neural crest cells and the periocular mesenchyme at stages 26-31. Expression appears to require Wnt-4 activity.</text>
</comment>
<comment type="similarity">
    <text evidence="1">Belongs to the pescadillo family.</text>
</comment>
<name>PESC_XENLA</name>
<reference key="1">
    <citation type="submission" date="2003-01" db="EMBL/GenBank/DDBJ databases">
        <authorList>
            <consortium name="NIH - Xenopus Gene Collection (XGC) project"/>
        </authorList>
    </citation>
    <scope>NUCLEOTIDE SEQUENCE [LARGE SCALE MRNA]</scope>
    <source>
        <tissue>Embryo</tissue>
    </source>
</reference>
<reference key="2">
    <citation type="journal article" date="2007" name="Dev. Biol.">
        <title>Pescadillo is required for Xenopus laevis eye development and neural crest migration.</title>
        <authorList>
            <person name="Gessert S."/>
            <person name="Maurus D."/>
            <person name="Roessner A."/>
            <person name="Kuehl M."/>
        </authorList>
    </citation>
    <scope>FUNCTION</scope>
    <scope>DEVELOPMENTAL STAGE</scope>
</reference>
<dbReference type="EMBL" id="BC043950">
    <property type="protein sequence ID" value="AAH43950.1"/>
    <property type="molecule type" value="mRNA"/>
</dbReference>
<dbReference type="RefSeq" id="NP_001080557.1">
    <property type="nucleotide sequence ID" value="NM_001087088.1"/>
</dbReference>
<dbReference type="SMR" id="Q7ZY69"/>
<dbReference type="DNASU" id="380249"/>
<dbReference type="GeneID" id="380249"/>
<dbReference type="KEGG" id="xla:380249"/>
<dbReference type="AGR" id="Xenbase:XB-GENE-480674"/>
<dbReference type="CTD" id="380249"/>
<dbReference type="Xenbase" id="XB-GENE-480674">
    <property type="gene designation" value="pes1.S"/>
</dbReference>
<dbReference type="OrthoDB" id="10264910at2759"/>
<dbReference type="Proteomes" id="UP000186698">
    <property type="component" value="Chromosome 1S"/>
</dbReference>
<dbReference type="Bgee" id="380249">
    <property type="expression patterns" value="Expressed in pancreas and 19 other cell types or tissues"/>
</dbReference>
<dbReference type="GO" id="GO:0005730">
    <property type="term" value="C:nucleolus"/>
    <property type="evidence" value="ECO:0000250"/>
    <property type="project" value="UniProtKB"/>
</dbReference>
<dbReference type="GO" id="GO:0005654">
    <property type="term" value="C:nucleoplasm"/>
    <property type="evidence" value="ECO:0000250"/>
    <property type="project" value="UniProtKB"/>
</dbReference>
<dbReference type="GO" id="GO:0070545">
    <property type="term" value="C:PeBoW complex"/>
    <property type="evidence" value="ECO:0000250"/>
    <property type="project" value="UniProtKB"/>
</dbReference>
<dbReference type="GO" id="GO:0030687">
    <property type="term" value="C:preribosome, large subunit precursor"/>
    <property type="evidence" value="ECO:0000250"/>
    <property type="project" value="UniProtKB"/>
</dbReference>
<dbReference type="GO" id="GO:0043021">
    <property type="term" value="F:ribonucleoprotein complex binding"/>
    <property type="evidence" value="ECO:0007669"/>
    <property type="project" value="UniProtKB-UniRule"/>
</dbReference>
<dbReference type="GO" id="GO:0003723">
    <property type="term" value="F:RNA binding"/>
    <property type="evidence" value="ECO:0000318"/>
    <property type="project" value="GO_Central"/>
</dbReference>
<dbReference type="GO" id="GO:0000466">
    <property type="term" value="P:maturation of 5.8S rRNA from tricistronic rRNA transcript (SSU-rRNA, 5.8S rRNA, LSU-rRNA)"/>
    <property type="evidence" value="ECO:0000250"/>
    <property type="project" value="UniProtKB"/>
</dbReference>
<dbReference type="GO" id="GO:0000463">
    <property type="term" value="P:maturation of LSU-rRNA from tricistronic rRNA transcript (SSU-rRNA, 5.8S rRNA, LSU-rRNA)"/>
    <property type="evidence" value="ECO:0000250"/>
    <property type="project" value="UniProtKB"/>
</dbReference>
<dbReference type="GO" id="GO:0051726">
    <property type="term" value="P:regulation of cell cycle"/>
    <property type="evidence" value="ECO:0000250"/>
    <property type="project" value="UniProtKB"/>
</dbReference>
<dbReference type="CDD" id="cd17709">
    <property type="entry name" value="BRCT_pescadillo_like"/>
    <property type="match status" value="1"/>
</dbReference>
<dbReference type="FunFam" id="3.40.50.10190:FF:000002">
    <property type="entry name" value="Pescadillo homolog"/>
    <property type="match status" value="1"/>
</dbReference>
<dbReference type="Gene3D" id="3.40.50.10190">
    <property type="entry name" value="BRCT domain"/>
    <property type="match status" value="1"/>
</dbReference>
<dbReference type="HAMAP" id="MF_03028">
    <property type="entry name" value="Pescadillo"/>
    <property type="match status" value="1"/>
</dbReference>
<dbReference type="InterPro" id="IPR001357">
    <property type="entry name" value="BRCT_dom"/>
</dbReference>
<dbReference type="InterPro" id="IPR036420">
    <property type="entry name" value="BRCT_dom_sf"/>
</dbReference>
<dbReference type="InterPro" id="IPR010613">
    <property type="entry name" value="PES"/>
</dbReference>
<dbReference type="PANTHER" id="PTHR12221">
    <property type="entry name" value="PESCADILLO - RELATED"/>
    <property type="match status" value="1"/>
</dbReference>
<dbReference type="PANTHER" id="PTHR12221:SF6">
    <property type="entry name" value="PESCADILLO HOMOLOG"/>
    <property type="match status" value="1"/>
</dbReference>
<dbReference type="Pfam" id="PF16589">
    <property type="entry name" value="BRCT_2"/>
    <property type="match status" value="1"/>
</dbReference>
<dbReference type="Pfam" id="PF06732">
    <property type="entry name" value="Pescadillo_N"/>
    <property type="match status" value="1"/>
</dbReference>
<dbReference type="SMART" id="SM00292">
    <property type="entry name" value="BRCT"/>
    <property type="match status" value="1"/>
</dbReference>
<dbReference type="SUPFAM" id="SSF52113">
    <property type="entry name" value="BRCT domain"/>
    <property type="match status" value="1"/>
</dbReference>
<dbReference type="PROSITE" id="PS50172">
    <property type="entry name" value="BRCT"/>
    <property type="match status" value="1"/>
</dbReference>
<proteinExistence type="evidence at transcript level"/>
<feature type="chain" id="PRO_0000370447" description="Pescadillo homolog">
    <location>
        <begin position="1"/>
        <end position="574"/>
    </location>
</feature>
<feature type="domain" description="BRCT" evidence="1">
    <location>
        <begin position="323"/>
        <end position="416"/>
    </location>
</feature>
<feature type="region of interest" description="Disordered" evidence="2">
    <location>
        <begin position="289"/>
        <end position="312"/>
    </location>
</feature>
<feature type="region of interest" description="Disordered" evidence="2">
    <location>
        <begin position="452"/>
        <end position="486"/>
    </location>
</feature>
<feature type="compositionally biased region" description="Acidic residues" evidence="2">
    <location>
        <begin position="292"/>
        <end position="303"/>
    </location>
</feature>
<feature type="compositionally biased region" description="Acidic residues" evidence="2">
    <location>
        <begin position="453"/>
        <end position="477"/>
    </location>
</feature>
<sequence>MGGLEKKKYERGSATNYITRNKARKKLQLSLPDFRRLCILKGIYPHEPKHKKKVNKGSTAPRTFYLLKDIKFLLHEPIVGKFREYKVFVRRLRKAYGKREWDSVDRIRDNKPSYKLDHIIKERYPTFIDAVRDLDDALSMCFLFSTFPRTGKCHVQTIQLCRRLSVEFLNYVIDSRSLRKVFLSIKGIYYQADILGQTLTWITPYAFSHDHPTDVDYRVMATFTEFYTTLLGFVNFHLYQTLNLQYPPKLDSFSEVDLKSDGEDKYALETEVYMEKLAALSASLSRVIPSEPNDDTEVDEFPADPENAGLEEEQKRQLQEEEKHKSLFVGLKFFLNREVPRDALAFIIRSFGGEVSWDASVCIGATYNSTDPSITHHIVDRPSIQTQIINRYYLQPQWVFDCVNARLLLPVEDYFPGVLLPPHLSPFVHEKEGDYIPPEKLRLMAMQKGENLGLDEEDDDDDDDDEEEDDDDDEEEEDKKLRQLENKKVGQKNLNVKVTAGKVKVEDRTQVAEQEKNEEKRLAIMMMKKKEKYLYNKIMFGKKRKVREANKLALKRKAHDEAVKVERKKKAKKH</sequence>
<evidence type="ECO:0000255" key="1">
    <source>
        <dbReference type="HAMAP-Rule" id="MF_03028"/>
    </source>
</evidence>
<evidence type="ECO:0000256" key="2">
    <source>
        <dbReference type="SAM" id="MobiDB-lite"/>
    </source>
</evidence>
<evidence type="ECO:0000269" key="3">
    <source>
    </source>
</evidence>
<gene>
    <name type="primary">pes1</name>
</gene>
<organism>
    <name type="scientific">Xenopus laevis</name>
    <name type="common">African clawed frog</name>
    <dbReference type="NCBI Taxonomy" id="8355"/>
    <lineage>
        <taxon>Eukaryota</taxon>
        <taxon>Metazoa</taxon>
        <taxon>Chordata</taxon>
        <taxon>Craniata</taxon>
        <taxon>Vertebrata</taxon>
        <taxon>Euteleostomi</taxon>
        <taxon>Amphibia</taxon>
        <taxon>Batrachia</taxon>
        <taxon>Anura</taxon>
        <taxon>Pipoidea</taxon>
        <taxon>Pipidae</taxon>
        <taxon>Xenopodinae</taxon>
        <taxon>Xenopus</taxon>
        <taxon>Xenopus</taxon>
    </lineage>
</organism>